<name>RM55_MOUSE</name>
<protein>
    <recommendedName>
        <fullName evidence="4">Large ribosomal subunit protein mL55</fullName>
    </recommendedName>
    <alternativeName>
        <fullName>39S ribosomal protein L55, mitochondrial</fullName>
        <shortName>L55mt</shortName>
        <shortName>MRP-L55</shortName>
    </alternativeName>
</protein>
<dbReference type="EMBL" id="AK012885">
    <property type="protein sequence ID" value="BAB28535.1"/>
    <property type="molecule type" value="mRNA"/>
</dbReference>
<dbReference type="EMBL" id="BC028538">
    <property type="protein sequence ID" value="AAH28538.1"/>
    <property type="molecule type" value="mRNA"/>
</dbReference>
<dbReference type="CCDS" id="CCDS24763.1">
    <molecule id="Q9CZ83-1"/>
</dbReference>
<dbReference type="CCDS" id="CCDS78955.1">
    <molecule id="Q9CZ83-2"/>
</dbReference>
<dbReference type="RefSeq" id="NP_001289263.1">
    <molecule id="Q9CZ83-2"/>
    <property type="nucleotide sequence ID" value="NM_001302334.2"/>
</dbReference>
<dbReference type="RefSeq" id="NP_001289264.1">
    <molecule id="Q9CZ83-2"/>
    <property type="nucleotide sequence ID" value="NM_001302335.2"/>
</dbReference>
<dbReference type="RefSeq" id="NP_001289265.1">
    <molecule id="Q9CZ83-1"/>
    <property type="nucleotide sequence ID" value="NM_001302336.2"/>
</dbReference>
<dbReference type="RefSeq" id="NP_001349837.1">
    <molecule id="Q9CZ83-2"/>
    <property type="nucleotide sequence ID" value="NM_001362908.1"/>
</dbReference>
<dbReference type="RefSeq" id="NP_001349838.1">
    <molecule id="Q9CZ83-1"/>
    <property type="nucleotide sequence ID" value="NM_001362909.1"/>
</dbReference>
<dbReference type="RefSeq" id="NP_080311.1">
    <molecule id="Q9CZ83-1"/>
    <property type="nucleotide sequence ID" value="NM_026035.4"/>
</dbReference>
<dbReference type="RefSeq" id="XP_006534035.1">
    <property type="nucleotide sequence ID" value="XM_006533972.2"/>
</dbReference>
<dbReference type="RefSeq" id="XP_006534037.1">
    <property type="nucleotide sequence ID" value="XM_006533974.3"/>
</dbReference>
<dbReference type="RefSeq" id="XP_006534038.1">
    <molecule id="Q9CZ83-2"/>
    <property type="nucleotide sequence ID" value="XM_006533975.5"/>
</dbReference>
<dbReference type="RefSeq" id="XP_006534039.1">
    <molecule id="Q9CZ83-2"/>
    <property type="nucleotide sequence ID" value="XM_006533976.4"/>
</dbReference>
<dbReference type="RefSeq" id="XP_006534041.1">
    <property type="nucleotide sequence ID" value="XM_006533978.3"/>
</dbReference>
<dbReference type="RefSeq" id="XP_030102099.1">
    <molecule id="Q9CZ83-1"/>
    <property type="nucleotide sequence ID" value="XM_030246239.2"/>
</dbReference>
<dbReference type="RefSeq" id="XP_030102100.1">
    <molecule id="Q9CZ83-1"/>
    <property type="nucleotide sequence ID" value="XM_030246240.2"/>
</dbReference>
<dbReference type="RefSeq" id="XP_030102101.1">
    <molecule id="Q9CZ83-1"/>
    <property type="nucleotide sequence ID" value="XM_030246241.1"/>
</dbReference>
<dbReference type="SMR" id="Q9CZ83"/>
<dbReference type="BioGRID" id="212020">
    <property type="interactions" value="26"/>
</dbReference>
<dbReference type="ComplexPortal" id="CPX-5302">
    <property type="entry name" value="39S mitochondrial large ribosomal subunit"/>
</dbReference>
<dbReference type="FunCoup" id="Q9CZ83">
    <property type="interactions" value="1150"/>
</dbReference>
<dbReference type="STRING" id="10090.ENSMUSP00000104414"/>
<dbReference type="iPTMnet" id="Q9CZ83"/>
<dbReference type="PhosphoSitePlus" id="Q9CZ83"/>
<dbReference type="SwissPalm" id="Q9CZ83"/>
<dbReference type="PaxDb" id="10090-ENSMUSP00000104413"/>
<dbReference type="PeptideAtlas" id="Q9CZ83"/>
<dbReference type="ProteomicsDB" id="260983">
    <molecule id="Q9CZ83-1"/>
</dbReference>
<dbReference type="ProteomicsDB" id="260984">
    <molecule id="Q9CZ83-2"/>
</dbReference>
<dbReference type="Pumba" id="Q9CZ83"/>
<dbReference type="Antibodypedia" id="34660">
    <property type="antibodies" value="77 antibodies from 19 providers"/>
</dbReference>
<dbReference type="Ensembl" id="ENSMUST00000045697.12">
    <molecule id="Q9CZ83-1"/>
    <property type="protein sequence ID" value="ENSMUSP00000048814.6"/>
    <property type="gene ID" value="ENSMUSG00000036860.15"/>
</dbReference>
<dbReference type="Ensembl" id="ENSMUST00000108784.4">
    <molecule id="Q9CZ83-2"/>
    <property type="protein sequence ID" value="ENSMUSP00000104412.4"/>
    <property type="gene ID" value="ENSMUSG00000036860.15"/>
</dbReference>
<dbReference type="Ensembl" id="ENSMUST00000108785.2">
    <molecule id="Q9CZ83-1"/>
    <property type="protein sequence ID" value="ENSMUSP00000104413.2"/>
    <property type="gene ID" value="ENSMUSG00000036860.15"/>
</dbReference>
<dbReference type="Ensembl" id="ENSMUST00000108786.8">
    <molecule id="Q9CZ83-2"/>
    <property type="protein sequence ID" value="ENSMUSP00000104414.2"/>
    <property type="gene ID" value="ENSMUSG00000036860.15"/>
</dbReference>
<dbReference type="Ensembl" id="ENSMUST00000108787.9">
    <molecule id="Q9CZ83-2"/>
    <property type="protein sequence ID" value="ENSMUSP00000104415.3"/>
    <property type="gene ID" value="ENSMUSG00000036860.15"/>
</dbReference>
<dbReference type="GeneID" id="67212"/>
<dbReference type="KEGG" id="mmu:67212"/>
<dbReference type="UCSC" id="uc007jdi.2">
    <molecule id="Q9CZ83-1"/>
    <property type="organism name" value="mouse"/>
</dbReference>
<dbReference type="UCSC" id="uc007jdk.2">
    <molecule id="Q9CZ83-2"/>
    <property type="organism name" value="mouse"/>
</dbReference>
<dbReference type="AGR" id="MGI:1914462"/>
<dbReference type="CTD" id="128308"/>
<dbReference type="MGI" id="MGI:1914462">
    <property type="gene designation" value="Mrpl55"/>
</dbReference>
<dbReference type="VEuPathDB" id="HostDB:ENSMUSG00000036860"/>
<dbReference type="eggNOG" id="KOG4616">
    <property type="taxonomic scope" value="Eukaryota"/>
</dbReference>
<dbReference type="GeneTree" id="ENSGT00390000010309"/>
<dbReference type="HOGENOM" id="CLU_139855_0_0_1"/>
<dbReference type="InParanoid" id="Q9CZ83"/>
<dbReference type="OMA" id="IRIRYKE"/>
<dbReference type="PhylomeDB" id="Q9CZ83"/>
<dbReference type="TreeFam" id="TF320422"/>
<dbReference type="Reactome" id="R-MMU-5389840">
    <property type="pathway name" value="Mitochondrial translation elongation"/>
</dbReference>
<dbReference type="Reactome" id="R-MMU-5419276">
    <property type="pathway name" value="Mitochondrial translation termination"/>
</dbReference>
<dbReference type="BioGRID-ORCS" id="67212">
    <property type="hits" value="20 hits in 79 CRISPR screens"/>
</dbReference>
<dbReference type="ChiTaRS" id="Mrpl55">
    <property type="organism name" value="mouse"/>
</dbReference>
<dbReference type="PRO" id="PR:Q9CZ83"/>
<dbReference type="Proteomes" id="UP000000589">
    <property type="component" value="Chromosome 11"/>
</dbReference>
<dbReference type="RNAct" id="Q9CZ83">
    <property type="molecule type" value="protein"/>
</dbReference>
<dbReference type="Bgee" id="ENSMUSG00000036860">
    <property type="expression patterns" value="Expressed in heart right ventricle and 228 other cell types or tissues"/>
</dbReference>
<dbReference type="GO" id="GO:0005743">
    <property type="term" value="C:mitochondrial inner membrane"/>
    <property type="evidence" value="ECO:0000303"/>
    <property type="project" value="ComplexPortal"/>
</dbReference>
<dbReference type="GO" id="GO:0005762">
    <property type="term" value="C:mitochondrial large ribosomal subunit"/>
    <property type="evidence" value="ECO:0000250"/>
    <property type="project" value="UniProtKB"/>
</dbReference>
<dbReference type="GO" id="GO:0005739">
    <property type="term" value="C:mitochondrion"/>
    <property type="evidence" value="ECO:0007005"/>
    <property type="project" value="MGI"/>
</dbReference>
<dbReference type="GO" id="GO:0003735">
    <property type="term" value="F:structural constituent of ribosome"/>
    <property type="evidence" value="ECO:0000250"/>
    <property type="project" value="UniProtKB"/>
</dbReference>
<dbReference type="GO" id="GO:0032543">
    <property type="term" value="P:mitochondrial translation"/>
    <property type="evidence" value="ECO:0000303"/>
    <property type="project" value="ComplexPortal"/>
</dbReference>
<dbReference type="GO" id="GO:0006412">
    <property type="term" value="P:translation"/>
    <property type="evidence" value="ECO:0000250"/>
    <property type="project" value="UniProtKB"/>
</dbReference>
<dbReference type="Gene3D" id="6.20.130.20">
    <property type="entry name" value="Mitochondrial ribosomal protein L55"/>
    <property type="match status" value="1"/>
</dbReference>
<dbReference type="InterPro" id="IPR018615">
    <property type="entry name" value="Ribosomal_mL55"/>
</dbReference>
<dbReference type="InterPro" id="IPR044884">
    <property type="entry name" value="Ribosomal_mL55_sf"/>
</dbReference>
<dbReference type="PANTHER" id="PTHR34095">
    <property type="entry name" value="39S RIBOSOMAL PROTEIN L55, MITOCHONDRIAL"/>
    <property type="match status" value="1"/>
</dbReference>
<dbReference type="PANTHER" id="PTHR34095:SF1">
    <property type="entry name" value="LARGE RIBOSOMAL SUBUNIT PROTEIN ML55"/>
    <property type="match status" value="1"/>
</dbReference>
<dbReference type="Pfam" id="PF09776">
    <property type="entry name" value="Mitoc_L55"/>
    <property type="match status" value="1"/>
</dbReference>
<organism>
    <name type="scientific">Mus musculus</name>
    <name type="common">Mouse</name>
    <dbReference type="NCBI Taxonomy" id="10090"/>
    <lineage>
        <taxon>Eukaryota</taxon>
        <taxon>Metazoa</taxon>
        <taxon>Chordata</taxon>
        <taxon>Craniata</taxon>
        <taxon>Vertebrata</taxon>
        <taxon>Euteleostomi</taxon>
        <taxon>Mammalia</taxon>
        <taxon>Eutheria</taxon>
        <taxon>Euarchontoglires</taxon>
        <taxon>Glires</taxon>
        <taxon>Rodentia</taxon>
        <taxon>Myomorpha</taxon>
        <taxon>Muroidea</taxon>
        <taxon>Muridae</taxon>
        <taxon>Murinae</taxon>
        <taxon>Mus</taxon>
        <taxon>Mus</taxon>
    </lineage>
</organism>
<comment type="subunit">
    <text evidence="1">Component of the mitochondrial ribosome large subunit (39S) which comprises a 16S rRNA and about 50 distinct proteins.</text>
</comment>
<comment type="subcellular location">
    <subcellularLocation>
        <location evidence="1">Mitochondrion</location>
    </subcellularLocation>
</comment>
<comment type="alternative products">
    <event type="alternative splicing"/>
    <isoform>
        <id>Q9CZ83-1</id>
        <name>1</name>
        <sequence type="displayed"/>
    </isoform>
    <isoform>
        <id>Q9CZ83-2</id>
        <name>2</name>
        <sequence type="described" ref="VSP_022478"/>
    </isoform>
</comment>
<comment type="similarity">
    <text evidence="4">Belongs to the mitochondrion-specific ribosomal protein mL55 family.</text>
</comment>
<keyword id="KW-0025">Alternative splicing</keyword>
<keyword id="KW-0496">Mitochondrion</keyword>
<keyword id="KW-0597">Phosphoprotein</keyword>
<keyword id="KW-1185">Reference proteome</keyword>
<keyword id="KW-0687">Ribonucleoprotein</keyword>
<keyword id="KW-0689">Ribosomal protein</keyword>
<keyword id="KW-0809">Transit peptide</keyword>
<proteinExistence type="evidence at protein level"/>
<evidence type="ECO:0000250" key="1">
    <source>
        <dbReference type="UniProtKB" id="P0C2B8"/>
    </source>
</evidence>
<evidence type="ECO:0000255" key="2"/>
<evidence type="ECO:0000303" key="3">
    <source>
    </source>
</evidence>
<evidence type="ECO:0000305" key="4"/>
<evidence type="ECO:0007744" key="5">
    <source>
    </source>
</evidence>
<gene>
    <name type="primary">Mrpl55</name>
</gene>
<feature type="transit peptide" description="Mitochondrion" evidence="2">
    <location>
        <begin position="1"/>
        <end position="32"/>
    </location>
</feature>
<feature type="chain" id="PRO_0000273100" description="Large ribosomal subunit protein mL55">
    <location>
        <begin position="33"/>
        <end position="127"/>
    </location>
</feature>
<feature type="modified residue" description="Phosphoserine" evidence="5">
    <location>
        <position position="84"/>
    </location>
</feature>
<feature type="splice variant" id="VSP_022478" description="In isoform 2." evidence="3">
    <original>L</original>
    <variation>LSACTSVR</variation>
    <location>
        <position position="7"/>
    </location>
</feature>
<feature type="sequence conflict" description="In Ref. 2; AAH28538." evidence="4" ref="2">
    <original>A</original>
    <variation>P</variation>
    <location>
        <position position="18"/>
    </location>
</feature>
<accession>Q9CZ83</accession>
<accession>Q8R030</accession>
<reference key="1">
    <citation type="journal article" date="2005" name="Science">
        <title>The transcriptional landscape of the mammalian genome.</title>
        <authorList>
            <person name="Carninci P."/>
            <person name="Kasukawa T."/>
            <person name="Katayama S."/>
            <person name="Gough J."/>
            <person name="Frith M.C."/>
            <person name="Maeda N."/>
            <person name="Oyama R."/>
            <person name="Ravasi T."/>
            <person name="Lenhard B."/>
            <person name="Wells C."/>
            <person name="Kodzius R."/>
            <person name="Shimokawa K."/>
            <person name="Bajic V.B."/>
            <person name="Brenner S.E."/>
            <person name="Batalov S."/>
            <person name="Forrest A.R."/>
            <person name="Zavolan M."/>
            <person name="Davis M.J."/>
            <person name="Wilming L.G."/>
            <person name="Aidinis V."/>
            <person name="Allen J.E."/>
            <person name="Ambesi-Impiombato A."/>
            <person name="Apweiler R."/>
            <person name="Aturaliya R.N."/>
            <person name="Bailey T.L."/>
            <person name="Bansal M."/>
            <person name="Baxter L."/>
            <person name="Beisel K.W."/>
            <person name="Bersano T."/>
            <person name="Bono H."/>
            <person name="Chalk A.M."/>
            <person name="Chiu K.P."/>
            <person name="Choudhary V."/>
            <person name="Christoffels A."/>
            <person name="Clutterbuck D.R."/>
            <person name="Crowe M.L."/>
            <person name="Dalla E."/>
            <person name="Dalrymple B.P."/>
            <person name="de Bono B."/>
            <person name="Della Gatta G."/>
            <person name="di Bernardo D."/>
            <person name="Down T."/>
            <person name="Engstrom P."/>
            <person name="Fagiolini M."/>
            <person name="Faulkner G."/>
            <person name="Fletcher C.F."/>
            <person name="Fukushima T."/>
            <person name="Furuno M."/>
            <person name="Futaki S."/>
            <person name="Gariboldi M."/>
            <person name="Georgii-Hemming P."/>
            <person name="Gingeras T.R."/>
            <person name="Gojobori T."/>
            <person name="Green R.E."/>
            <person name="Gustincich S."/>
            <person name="Harbers M."/>
            <person name="Hayashi Y."/>
            <person name="Hensch T.K."/>
            <person name="Hirokawa N."/>
            <person name="Hill D."/>
            <person name="Huminiecki L."/>
            <person name="Iacono M."/>
            <person name="Ikeo K."/>
            <person name="Iwama A."/>
            <person name="Ishikawa T."/>
            <person name="Jakt M."/>
            <person name="Kanapin A."/>
            <person name="Katoh M."/>
            <person name="Kawasawa Y."/>
            <person name="Kelso J."/>
            <person name="Kitamura H."/>
            <person name="Kitano H."/>
            <person name="Kollias G."/>
            <person name="Krishnan S.P."/>
            <person name="Kruger A."/>
            <person name="Kummerfeld S.K."/>
            <person name="Kurochkin I.V."/>
            <person name="Lareau L.F."/>
            <person name="Lazarevic D."/>
            <person name="Lipovich L."/>
            <person name="Liu J."/>
            <person name="Liuni S."/>
            <person name="McWilliam S."/>
            <person name="Madan Babu M."/>
            <person name="Madera M."/>
            <person name="Marchionni L."/>
            <person name="Matsuda H."/>
            <person name="Matsuzawa S."/>
            <person name="Miki H."/>
            <person name="Mignone F."/>
            <person name="Miyake S."/>
            <person name="Morris K."/>
            <person name="Mottagui-Tabar S."/>
            <person name="Mulder N."/>
            <person name="Nakano N."/>
            <person name="Nakauchi H."/>
            <person name="Ng P."/>
            <person name="Nilsson R."/>
            <person name="Nishiguchi S."/>
            <person name="Nishikawa S."/>
            <person name="Nori F."/>
            <person name="Ohara O."/>
            <person name="Okazaki Y."/>
            <person name="Orlando V."/>
            <person name="Pang K.C."/>
            <person name="Pavan W.J."/>
            <person name="Pavesi G."/>
            <person name="Pesole G."/>
            <person name="Petrovsky N."/>
            <person name="Piazza S."/>
            <person name="Reed J."/>
            <person name="Reid J.F."/>
            <person name="Ring B.Z."/>
            <person name="Ringwald M."/>
            <person name="Rost B."/>
            <person name="Ruan Y."/>
            <person name="Salzberg S.L."/>
            <person name="Sandelin A."/>
            <person name="Schneider C."/>
            <person name="Schoenbach C."/>
            <person name="Sekiguchi K."/>
            <person name="Semple C.A."/>
            <person name="Seno S."/>
            <person name="Sessa L."/>
            <person name="Sheng Y."/>
            <person name="Shibata Y."/>
            <person name="Shimada H."/>
            <person name="Shimada K."/>
            <person name="Silva D."/>
            <person name="Sinclair B."/>
            <person name="Sperling S."/>
            <person name="Stupka E."/>
            <person name="Sugiura K."/>
            <person name="Sultana R."/>
            <person name="Takenaka Y."/>
            <person name="Taki K."/>
            <person name="Tammoja K."/>
            <person name="Tan S.L."/>
            <person name="Tang S."/>
            <person name="Taylor M.S."/>
            <person name="Tegner J."/>
            <person name="Teichmann S.A."/>
            <person name="Ueda H.R."/>
            <person name="van Nimwegen E."/>
            <person name="Verardo R."/>
            <person name="Wei C.L."/>
            <person name="Yagi K."/>
            <person name="Yamanishi H."/>
            <person name="Zabarovsky E."/>
            <person name="Zhu S."/>
            <person name="Zimmer A."/>
            <person name="Hide W."/>
            <person name="Bult C."/>
            <person name="Grimmond S.M."/>
            <person name="Teasdale R.D."/>
            <person name="Liu E.T."/>
            <person name="Brusic V."/>
            <person name="Quackenbush J."/>
            <person name="Wahlestedt C."/>
            <person name="Mattick J.S."/>
            <person name="Hume D.A."/>
            <person name="Kai C."/>
            <person name="Sasaki D."/>
            <person name="Tomaru Y."/>
            <person name="Fukuda S."/>
            <person name="Kanamori-Katayama M."/>
            <person name="Suzuki M."/>
            <person name="Aoki J."/>
            <person name="Arakawa T."/>
            <person name="Iida J."/>
            <person name="Imamura K."/>
            <person name="Itoh M."/>
            <person name="Kato T."/>
            <person name="Kawaji H."/>
            <person name="Kawagashira N."/>
            <person name="Kawashima T."/>
            <person name="Kojima M."/>
            <person name="Kondo S."/>
            <person name="Konno H."/>
            <person name="Nakano K."/>
            <person name="Ninomiya N."/>
            <person name="Nishio T."/>
            <person name="Okada M."/>
            <person name="Plessy C."/>
            <person name="Shibata K."/>
            <person name="Shiraki T."/>
            <person name="Suzuki S."/>
            <person name="Tagami M."/>
            <person name="Waki K."/>
            <person name="Watahiki A."/>
            <person name="Okamura-Oho Y."/>
            <person name="Suzuki H."/>
            <person name="Kawai J."/>
            <person name="Hayashizaki Y."/>
        </authorList>
    </citation>
    <scope>NUCLEOTIDE SEQUENCE [LARGE SCALE MRNA] (ISOFORM 1)</scope>
    <source>
        <strain>C57BL/6J</strain>
    </source>
</reference>
<reference key="2">
    <citation type="journal article" date="2004" name="Genome Res.">
        <title>The status, quality, and expansion of the NIH full-length cDNA project: the Mammalian Gene Collection (MGC).</title>
        <authorList>
            <consortium name="The MGC Project Team"/>
        </authorList>
    </citation>
    <scope>NUCLEOTIDE SEQUENCE [LARGE SCALE MRNA] (ISOFORM 2)</scope>
    <source>
        <tissue>Mammary gland</tissue>
    </source>
</reference>
<reference key="3">
    <citation type="journal article" date="2010" name="Cell">
        <title>A tissue-specific atlas of mouse protein phosphorylation and expression.</title>
        <authorList>
            <person name="Huttlin E.L."/>
            <person name="Jedrychowski M.P."/>
            <person name="Elias J.E."/>
            <person name="Goswami T."/>
            <person name="Rad R."/>
            <person name="Beausoleil S.A."/>
            <person name="Villen J."/>
            <person name="Haas W."/>
            <person name="Sowa M.E."/>
            <person name="Gygi S.P."/>
        </authorList>
    </citation>
    <scope>PHOSPHORYLATION [LARGE SCALE ANALYSIS] AT SER-84</scope>
    <scope>IDENTIFICATION BY MASS SPECTROMETRY [LARGE SCALE ANALYSIS]</scope>
    <source>
        <tissue>Brain</tissue>
        <tissue>Brown adipose tissue</tissue>
        <tissue>Heart</tissue>
        <tissue>Kidney</tissue>
        <tissue>Liver</tissue>
        <tissue>Pancreas</tissue>
        <tissue>Testis</tissue>
    </source>
</reference>
<sequence length="127" mass="15122">MPLAILLSLLRHCGVRAALPTPRHLHTSPWRADCSRASLTRLRRQAYARLYPVLLVKQDGSTIHIRYREPRRMLAMPLDLDALSPEERRARFRKREAQLQQKREEEPEVVDSFDTERYKQFWTKTKK</sequence>